<dbReference type="EMBL" id="AABR07021872">
    <property type="status" value="NOT_ANNOTATED_CDS"/>
    <property type="molecule type" value="Genomic_DNA"/>
</dbReference>
<dbReference type="EMBL" id="CH473985">
    <property type="protein sequence ID" value="EDL94801.1"/>
    <property type="molecule type" value="Genomic_DNA"/>
</dbReference>
<dbReference type="EMBL" id="BC072529">
    <property type="protein sequence ID" value="AAH72529.1"/>
    <property type="molecule type" value="mRNA"/>
</dbReference>
<dbReference type="RefSeq" id="NP_476480.2">
    <property type="nucleotide sequence ID" value="NM_057139.2"/>
</dbReference>
<dbReference type="SMR" id="Q6IMY8"/>
<dbReference type="CORUM" id="Q6IMY8"/>
<dbReference type="FunCoup" id="Q6IMY8">
    <property type="interactions" value="4309"/>
</dbReference>
<dbReference type="IntAct" id="Q6IMY8">
    <property type="interactions" value="8"/>
</dbReference>
<dbReference type="MINT" id="Q6IMY8"/>
<dbReference type="STRING" id="10116.ENSRNOP00000070912"/>
<dbReference type="GlyGen" id="Q6IMY8">
    <property type="glycosylation" value="2 sites, 1 O-linked glycan (1 site)"/>
</dbReference>
<dbReference type="iPTMnet" id="Q6IMY8"/>
<dbReference type="PhosphoSitePlus" id="Q6IMY8"/>
<dbReference type="jPOST" id="Q6IMY8"/>
<dbReference type="PaxDb" id="10116-ENSRNOP00000046783"/>
<dbReference type="Ensembl" id="ENSRNOT00000044477.4">
    <property type="protein sequence ID" value="ENSRNOP00000046783.3"/>
    <property type="gene ID" value="ENSRNOG00000033790.5"/>
</dbReference>
<dbReference type="GeneID" id="117280"/>
<dbReference type="KEGG" id="rno:117280"/>
<dbReference type="AGR" id="RGD:620372"/>
<dbReference type="CTD" id="3192"/>
<dbReference type="RGD" id="620372">
    <property type="gene designation" value="Hnrnpu"/>
</dbReference>
<dbReference type="eggNOG" id="KOG2242">
    <property type="taxonomic scope" value="Eukaryota"/>
</dbReference>
<dbReference type="GeneTree" id="ENSGT00940000156546"/>
<dbReference type="HOGENOM" id="CLU_012140_1_0_1"/>
<dbReference type="InParanoid" id="Q6IMY8"/>
<dbReference type="PhylomeDB" id="Q6IMY8"/>
<dbReference type="TreeFam" id="TF317301"/>
<dbReference type="Reactome" id="R-RNO-72163">
    <property type="pathway name" value="mRNA Splicing - Major Pathway"/>
</dbReference>
<dbReference type="Reactome" id="R-RNO-72203">
    <property type="pathway name" value="Processing of Capped Intron-Containing Pre-mRNA"/>
</dbReference>
<dbReference type="PRO" id="PR:Q6IMY8"/>
<dbReference type="Proteomes" id="UP000002494">
    <property type="component" value="Chromosome 13"/>
</dbReference>
<dbReference type="Proteomes" id="UP000234681">
    <property type="component" value="Chromosome 13"/>
</dbReference>
<dbReference type="Bgee" id="ENSRNOG00000033790">
    <property type="expression patterns" value="Expressed in thymus and 20 other cell types or tissues"/>
</dbReference>
<dbReference type="ExpressionAtlas" id="Q6IMY8">
    <property type="expression patterns" value="baseline and differential"/>
</dbReference>
<dbReference type="GO" id="GO:0071013">
    <property type="term" value="C:catalytic step 2 spliceosome"/>
    <property type="evidence" value="ECO:0000266"/>
    <property type="project" value="RGD"/>
</dbReference>
<dbReference type="GO" id="GO:0009986">
    <property type="term" value="C:cell surface"/>
    <property type="evidence" value="ECO:0000266"/>
    <property type="project" value="RGD"/>
</dbReference>
<dbReference type="GO" id="GO:0005813">
    <property type="term" value="C:centrosome"/>
    <property type="evidence" value="ECO:0000250"/>
    <property type="project" value="UniProtKB"/>
</dbReference>
<dbReference type="GO" id="GO:0070937">
    <property type="term" value="C:CRD-mediated mRNA stability complex"/>
    <property type="evidence" value="ECO:0000266"/>
    <property type="project" value="RGD"/>
</dbReference>
<dbReference type="GO" id="GO:0036464">
    <property type="term" value="C:cytoplasmic ribonucleoprotein granule"/>
    <property type="evidence" value="ECO:0000266"/>
    <property type="project" value="RGD"/>
</dbReference>
<dbReference type="GO" id="GO:0005829">
    <property type="term" value="C:cytosol"/>
    <property type="evidence" value="ECO:0000266"/>
    <property type="project" value="RGD"/>
</dbReference>
<dbReference type="GO" id="GO:0030425">
    <property type="term" value="C:dendrite"/>
    <property type="evidence" value="ECO:0007669"/>
    <property type="project" value="GOC"/>
</dbReference>
<dbReference type="GO" id="GO:0098577">
    <property type="term" value="C:inactive sex chromosome"/>
    <property type="evidence" value="ECO:0000266"/>
    <property type="project" value="RGD"/>
</dbReference>
<dbReference type="GO" id="GO:0000776">
    <property type="term" value="C:kinetochore"/>
    <property type="evidence" value="ECO:0000250"/>
    <property type="project" value="UniProtKB"/>
</dbReference>
<dbReference type="GO" id="GO:0030496">
    <property type="term" value="C:midbody"/>
    <property type="evidence" value="ECO:0000250"/>
    <property type="project" value="UniProtKB"/>
</dbReference>
<dbReference type="GO" id="GO:0072686">
    <property type="term" value="C:mitotic spindle"/>
    <property type="evidence" value="ECO:0000250"/>
    <property type="project" value="UniProtKB"/>
</dbReference>
<dbReference type="GO" id="GO:1990498">
    <property type="term" value="C:mitotic spindle microtubule"/>
    <property type="evidence" value="ECO:0000250"/>
    <property type="project" value="UniProtKB"/>
</dbReference>
<dbReference type="GO" id="GO:1990023">
    <property type="term" value="C:mitotic spindle midzone"/>
    <property type="evidence" value="ECO:0000250"/>
    <property type="project" value="UniProtKB"/>
</dbReference>
<dbReference type="GO" id="GO:0000228">
    <property type="term" value="C:nuclear chromosome"/>
    <property type="evidence" value="ECO:0000266"/>
    <property type="project" value="RGD"/>
</dbReference>
<dbReference type="GO" id="GO:0016363">
    <property type="term" value="C:nuclear matrix"/>
    <property type="evidence" value="ECO:0000266"/>
    <property type="project" value="RGD"/>
</dbReference>
<dbReference type="GO" id="GO:0016607">
    <property type="term" value="C:nuclear speck"/>
    <property type="evidence" value="ECO:0000266"/>
    <property type="project" value="RGD"/>
</dbReference>
<dbReference type="GO" id="GO:0005654">
    <property type="term" value="C:nucleoplasm"/>
    <property type="evidence" value="ECO:0000266"/>
    <property type="project" value="RGD"/>
</dbReference>
<dbReference type="GO" id="GO:0005634">
    <property type="term" value="C:nucleus"/>
    <property type="evidence" value="ECO:0000266"/>
    <property type="project" value="RGD"/>
</dbReference>
<dbReference type="GO" id="GO:0032991">
    <property type="term" value="C:protein-containing complex"/>
    <property type="evidence" value="ECO:0000266"/>
    <property type="project" value="RGD"/>
</dbReference>
<dbReference type="GO" id="GO:1990904">
    <property type="term" value="C:ribonucleoprotein complex"/>
    <property type="evidence" value="ECO:0000314"/>
    <property type="project" value="UniProtKB"/>
</dbReference>
<dbReference type="GO" id="GO:0090575">
    <property type="term" value="C:RNA polymerase II transcription regulator complex"/>
    <property type="evidence" value="ECO:0000266"/>
    <property type="project" value="RGD"/>
</dbReference>
<dbReference type="GO" id="GO:0000922">
    <property type="term" value="C:spindle pole"/>
    <property type="evidence" value="ECO:0007669"/>
    <property type="project" value="UniProtKB-SubCell"/>
</dbReference>
<dbReference type="GO" id="GO:0005697">
    <property type="term" value="C:telomerase holoenzyme complex"/>
    <property type="evidence" value="ECO:0000266"/>
    <property type="project" value="RGD"/>
</dbReference>
<dbReference type="GO" id="GO:0003779">
    <property type="term" value="F:actin binding"/>
    <property type="evidence" value="ECO:0000266"/>
    <property type="project" value="RGD"/>
</dbReference>
<dbReference type="GO" id="GO:0005524">
    <property type="term" value="F:ATP binding"/>
    <property type="evidence" value="ECO:0000250"/>
    <property type="project" value="UniProtKB"/>
</dbReference>
<dbReference type="GO" id="GO:0003682">
    <property type="term" value="F:chromatin binding"/>
    <property type="evidence" value="ECO:0000250"/>
    <property type="project" value="UniProtKB"/>
</dbReference>
<dbReference type="GO" id="GO:0031490">
    <property type="term" value="F:chromatin DNA binding"/>
    <property type="evidence" value="ECO:0000266"/>
    <property type="project" value="RGD"/>
</dbReference>
<dbReference type="GO" id="GO:0003677">
    <property type="term" value="F:DNA binding"/>
    <property type="evidence" value="ECO:0000266"/>
    <property type="project" value="RGD"/>
</dbReference>
<dbReference type="GO" id="GO:0003690">
    <property type="term" value="F:double-stranded DNA binding"/>
    <property type="evidence" value="ECO:0000266"/>
    <property type="project" value="RGD"/>
</dbReference>
<dbReference type="GO" id="GO:0003725">
    <property type="term" value="F:double-stranded RNA binding"/>
    <property type="evidence" value="ECO:0000266"/>
    <property type="project" value="RGD"/>
</dbReference>
<dbReference type="GO" id="GO:0042802">
    <property type="term" value="F:identical protein binding"/>
    <property type="evidence" value="ECO:0000250"/>
    <property type="project" value="UniProtKB"/>
</dbReference>
<dbReference type="GO" id="GO:0106222">
    <property type="term" value="F:lncRNA binding"/>
    <property type="evidence" value="ECO:0000266"/>
    <property type="project" value="RGD"/>
</dbReference>
<dbReference type="GO" id="GO:0003730">
    <property type="term" value="F:mRNA 3'-UTR binding"/>
    <property type="evidence" value="ECO:0000266"/>
    <property type="project" value="RGD"/>
</dbReference>
<dbReference type="GO" id="GO:0034584">
    <property type="term" value="F:piRNA binding"/>
    <property type="evidence" value="ECO:0000266"/>
    <property type="project" value="RGD"/>
</dbReference>
<dbReference type="GO" id="GO:0008143">
    <property type="term" value="F:poly(A) binding"/>
    <property type="evidence" value="ECO:0000266"/>
    <property type="project" value="RGD"/>
</dbReference>
<dbReference type="GO" id="GO:0017130">
    <property type="term" value="F:poly(C) RNA binding"/>
    <property type="evidence" value="ECO:0000266"/>
    <property type="project" value="RGD"/>
</dbReference>
<dbReference type="GO" id="GO:0034046">
    <property type="term" value="F:poly(G) binding"/>
    <property type="evidence" value="ECO:0000314"/>
    <property type="project" value="RGD"/>
</dbReference>
<dbReference type="GO" id="GO:0036002">
    <property type="term" value="F:pre-mRNA binding"/>
    <property type="evidence" value="ECO:0000266"/>
    <property type="project" value="RGD"/>
</dbReference>
<dbReference type="GO" id="GO:1990841">
    <property type="term" value="F:promoter-specific chromatin binding"/>
    <property type="evidence" value="ECO:0000314"/>
    <property type="project" value="RGD"/>
</dbReference>
<dbReference type="GO" id="GO:0044877">
    <property type="term" value="F:protein-containing complex binding"/>
    <property type="evidence" value="ECO:0000266"/>
    <property type="project" value="RGD"/>
</dbReference>
<dbReference type="GO" id="GO:0043021">
    <property type="term" value="F:ribonucleoprotein complex binding"/>
    <property type="evidence" value="ECO:0000353"/>
    <property type="project" value="RGD"/>
</dbReference>
<dbReference type="GO" id="GO:0003723">
    <property type="term" value="F:RNA binding"/>
    <property type="evidence" value="ECO:0000314"/>
    <property type="project" value="RGD"/>
</dbReference>
<dbReference type="GO" id="GO:0099122">
    <property type="term" value="F:RNA polymerase II C-terminal domain binding"/>
    <property type="evidence" value="ECO:0000250"/>
    <property type="project" value="UniProtKB"/>
</dbReference>
<dbReference type="GO" id="GO:0000978">
    <property type="term" value="F:RNA polymerase II cis-regulatory region sequence-specific DNA binding"/>
    <property type="evidence" value="ECO:0000266"/>
    <property type="project" value="RGD"/>
</dbReference>
<dbReference type="GO" id="GO:0000993">
    <property type="term" value="F:RNA polymerase II complex binding"/>
    <property type="evidence" value="ECO:0000266"/>
    <property type="project" value="RGD"/>
</dbReference>
<dbReference type="GO" id="GO:0043565">
    <property type="term" value="F:sequence-specific DNA binding"/>
    <property type="evidence" value="ECO:0000250"/>
    <property type="project" value="UniProtKB"/>
</dbReference>
<dbReference type="GO" id="GO:1990837">
    <property type="term" value="F:sequence-specific double-stranded DNA binding"/>
    <property type="evidence" value="ECO:0000266"/>
    <property type="project" value="RGD"/>
</dbReference>
<dbReference type="GO" id="GO:0003697">
    <property type="term" value="F:single-stranded DNA binding"/>
    <property type="evidence" value="ECO:0000266"/>
    <property type="project" value="RGD"/>
</dbReference>
<dbReference type="GO" id="GO:0003727">
    <property type="term" value="F:single-stranded RNA binding"/>
    <property type="evidence" value="ECO:0000266"/>
    <property type="project" value="RGD"/>
</dbReference>
<dbReference type="GO" id="GO:0017069">
    <property type="term" value="F:snRNA binding"/>
    <property type="evidence" value="ECO:0000266"/>
    <property type="project" value="RGD"/>
</dbReference>
<dbReference type="GO" id="GO:0070034">
    <property type="term" value="F:telomerase RNA binding"/>
    <property type="evidence" value="ECO:0000266"/>
    <property type="project" value="RGD"/>
</dbReference>
<dbReference type="GO" id="GO:0001097">
    <property type="term" value="F:TFIIH-class transcription factor complex binding"/>
    <property type="evidence" value="ECO:0000266"/>
    <property type="project" value="RGD"/>
</dbReference>
<dbReference type="GO" id="GO:0003714">
    <property type="term" value="F:transcription corepressor activity"/>
    <property type="evidence" value="ECO:0000266"/>
    <property type="project" value="RGD"/>
</dbReference>
<dbReference type="GO" id="GO:1990845">
    <property type="term" value="P:adaptive thermogenesis"/>
    <property type="evidence" value="ECO:0000250"/>
    <property type="project" value="UniProtKB"/>
</dbReference>
<dbReference type="GO" id="GO:0000380">
    <property type="term" value="P:alternative mRNA splicing, via spliceosome"/>
    <property type="evidence" value="ECO:0000318"/>
    <property type="project" value="GO_Central"/>
</dbReference>
<dbReference type="GO" id="GO:0055013">
    <property type="term" value="P:cardiac muscle cell development"/>
    <property type="evidence" value="ECO:0000266"/>
    <property type="project" value="RGD"/>
</dbReference>
<dbReference type="GO" id="GO:0051301">
    <property type="term" value="P:cell division"/>
    <property type="evidence" value="ECO:0007669"/>
    <property type="project" value="UniProtKB-KW"/>
</dbReference>
<dbReference type="GO" id="GO:0071549">
    <property type="term" value="P:cellular response to dexamethasone stimulus"/>
    <property type="evidence" value="ECO:0000314"/>
    <property type="project" value="RGD"/>
</dbReference>
<dbReference type="GO" id="GO:0071385">
    <property type="term" value="P:cellular response to glucocorticoid stimulus"/>
    <property type="evidence" value="ECO:0000266"/>
    <property type="project" value="RGD"/>
</dbReference>
<dbReference type="GO" id="GO:1990830">
    <property type="term" value="P:cellular response to leukemia inhibitory factor"/>
    <property type="evidence" value="ECO:0000250"/>
    <property type="project" value="UniProtKB"/>
</dbReference>
<dbReference type="GO" id="GO:0032922">
    <property type="term" value="P:circadian regulation of gene expression"/>
    <property type="evidence" value="ECO:0000266"/>
    <property type="project" value="RGD"/>
</dbReference>
<dbReference type="GO" id="GO:0070934">
    <property type="term" value="P:CRD-mediated mRNA stabilization"/>
    <property type="evidence" value="ECO:0000266"/>
    <property type="project" value="RGD"/>
</dbReference>
<dbReference type="GO" id="GO:0098963">
    <property type="term" value="P:dendritic transport of messenger ribonucleoprotein complex"/>
    <property type="evidence" value="ECO:0000266"/>
    <property type="project" value="RGD"/>
</dbReference>
<dbReference type="GO" id="GO:0009048">
    <property type="term" value="P:dosage compensation by inactivation of X chromosome"/>
    <property type="evidence" value="ECO:0000266"/>
    <property type="project" value="RGD"/>
</dbReference>
<dbReference type="GO" id="GO:0030218">
    <property type="term" value="P:erythrocyte differentiation"/>
    <property type="evidence" value="ECO:0000266"/>
    <property type="project" value="RGD"/>
</dbReference>
<dbReference type="GO" id="GO:0051457">
    <property type="term" value="P:maintenance of protein location in nucleus"/>
    <property type="evidence" value="ECO:0000266"/>
    <property type="project" value="RGD"/>
</dbReference>
<dbReference type="GO" id="GO:0016071">
    <property type="term" value="P:mRNA metabolic process"/>
    <property type="evidence" value="ECO:0000266"/>
    <property type="project" value="RGD"/>
</dbReference>
<dbReference type="GO" id="GO:0048255">
    <property type="term" value="P:mRNA stabilization"/>
    <property type="evidence" value="ECO:0000266"/>
    <property type="project" value="RGD"/>
</dbReference>
<dbReference type="GO" id="GO:1900152">
    <property type="term" value="P:negative regulation of nuclear-transcribed mRNA catabolic process, deadenylation-dependent decay"/>
    <property type="evidence" value="ECO:0000266"/>
    <property type="project" value="RGD"/>
</dbReference>
<dbReference type="GO" id="GO:2000737">
    <property type="term" value="P:negative regulation of stem cell differentiation"/>
    <property type="evidence" value="ECO:0000250"/>
    <property type="project" value="UniProtKB"/>
</dbReference>
<dbReference type="GO" id="GO:0032211">
    <property type="term" value="P:negative regulation of telomere maintenance via telomerase"/>
    <property type="evidence" value="ECO:0000266"/>
    <property type="project" value="RGD"/>
</dbReference>
<dbReference type="GO" id="GO:0000122">
    <property type="term" value="P:negative regulation of transcription by RNA polymerase II"/>
    <property type="evidence" value="ECO:0000266"/>
    <property type="project" value="RGD"/>
</dbReference>
<dbReference type="GO" id="GO:0034244">
    <property type="term" value="P:negative regulation of transcription elongation by RNA polymerase II"/>
    <property type="evidence" value="ECO:0000266"/>
    <property type="project" value="RGD"/>
</dbReference>
<dbReference type="GO" id="GO:1902425">
    <property type="term" value="P:positive regulation of attachment of mitotic spindle microtubules to kinetochore"/>
    <property type="evidence" value="ECO:0000250"/>
    <property type="project" value="UniProtKB"/>
</dbReference>
<dbReference type="GO" id="GO:0090336">
    <property type="term" value="P:positive regulation of brown fat cell differentiation"/>
    <property type="evidence" value="ECO:0000250"/>
    <property type="project" value="UniProtKB"/>
</dbReference>
<dbReference type="GO" id="GO:2000767">
    <property type="term" value="P:positive regulation of cytoplasmic translation"/>
    <property type="evidence" value="ECO:0000266"/>
    <property type="project" value="RGD"/>
</dbReference>
<dbReference type="GO" id="GO:0010628">
    <property type="term" value="P:positive regulation of gene expression"/>
    <property type="evidence" value="ECO:0000315"/>
    <property type="project" value="RGD"/>
</dbReference>
<dbReference type="GO" id="GO:2000648">
    <property type="term" value="P:positive regulation of stem cell proliferation"/>
    <property type="evidence" value="ECO:0000266"/>
    <property type="project" value="RGD"/>
</dbReference>
<dbReference type="GO" id="GO:0045944">
    <property type="term" value="P:positive regulation of transcription by RNA polymerase II"/>
    <property type="evidence" value="ECO:0000250"/>
    <property type="project" value="UniProtKB"/>
</dbReference>
<dbReference type="GO" id="GO:1902889">
    <property type="term" value="P:protein localization to spindle microtubule"/>
    <property type="evidence" value="ECO:0000250"/>
    <property type="project" value="UniProtKB"/>
</dbReference>
<dbReference type="GO" id="GO:0060816">
    <property type="term" value="P:random inactivation of X chromosome"/>
    <property type="evidence" value="ECO:0000266"/>
    <property type="project" value="RGD"/>
</dbReference>
<dbReference type="GO" id="GO:0000381">
    <property type="term" value="P:regulation of alternative mRNA splicing, via spliceosome"/>
    <property type="evidence" value="ECO:0000266"/>
    <property type="project" value="RGD"/>
</dbReference>
<dbReference type="GO" id="GO:1902275">
    <property type="term" value="P:regulation of chromatin organization"/>
    <property type="evidence" value="ECO:0000250"/>
    <property type="project" value="UniProtKB"/>
</dbReference>
<dbReference type="GO" id="GO:0007346">
    <property type="term" value="P:regulation of mitotic cell cycle"/>
    <property type="evidence" value="ECO:0000250"/>
    <property type="project" value="UniProtKB"/>
</dbReference>
<dbReference type="GO" id="GO:1901673">
    <property type="term" value="P:regulation of mitotic spindle assembly"/>
    <property type="evidence" value="ECO:0000250"/>
    <property type="project" value="UniProtKB"/>
</dbReference>
<dbReference type="GO" id="GO:0031048">
    <property type="term" value="P:regulatory ncRNA-mediated heterochromatin formation"/>
    <property type="evidence" value="ECO:0000266"/>
    <property type="project" value="RGD"/>
</dbReference>
<dbReference type="GO" id="GO:1990280">
    <property type="term" value="P:RNA localization to chromatin"/>
    <property type="evidence" value="ECO:0000266"/>
    <property type="project" value="RGD"/>
</dbReference>
<dbReference type="CDD" id="cd12884">
    <property type="entry name" value="SPRY_hnRNP"/>
    <property type="match status" value="1"/>
</dbReference>
<dbReference type="FunFam" id="1.10.720.30:FF:000004">
    <property type="entry name" value="heterogeneous nuclear ribonucleoprotein U isoform X1"/>
    <property type="match status" value="1"/>
</dbReference>
<dbReference type="FunFam" id="2.60.120.920:FF:000006">
    <property type="entry name" value="heterogeneous nuclear ribonucleoprotein U isoform X1"/>
    <property type="match status" value="1"/>
</dbReference>
<dbReference type="FunFam" id="3.40.50.300:FF:000376">
    <property type="entry name" value="Putative heterogeneous nuclear ribonucleoprotein U"/>
    <property type="match status" value="1"/>
</dbReference>
<dbReference type="Gene3D" id="2.60.120.920">
    <property type="match status" value="1"/>
</dbReference>
<dbReference type="Gene3D" id="3.40.50.300">
    <property type="entry name" value="P-loop containing nucleotide triphosphate hydrolases"/>
    <property type="match status" value="1"/>
</dbReference>
<dbReference type="Gene3D" id="1.10.720.30">
    <property type="entry name" value="SAP domain"/>
    <property type="match status" value="1"/>
</dbReference>
<dbReference type="InterPro" id="IPR001870">
    <property type="entry name" value="B30.2/SPRY"/>
</dbReference>
<dbReference type="InterPro" id="IPR043136">
    <property type="entry name" value="B30.2/SPRY_sf"/>
</dbReference>
<dbReference type="InterPro" id="IPR013320">
    <property type="entry name" value="ConA-like_dom_sf"/>
</dbReference>
<dbReference type="InterPro" id="IPR027417">
    <property type="entry name" value="P-loop_NTPase"/>
</dbReference>
<dbReference type="InterPro" id="IPR003034">
    <property type="entry name" value="SAP_dom"/>
</dbReference>
<dbReference type="InterPro" id="IPR036361">
    <property type="entry name" value="SAP_dom_sf"/>
</dbReference>
<dbReference type="InterPro" id="IPR003877">
    <property type="entry name" value="SPRY_dom"/>
</dbReference>
<dbReference type="InterPro" id="IPR035778">
    <property type="entry name" value="SPRY_hnRNP_U"/>
</dbReference>
<dbReference type="PANTHER" id="PTHR12381:SF11">
    <property type="entry name" value="HETEROGENEOUS NUCLEAR RIBONUCLEOPROTEIN U"/>
    <property type="match status" value="1"/>
</dbReference>
<dbReference type="PANTHER" id="PTHR12381">
    <property type="entry name" value="HETEROGENEOUS NUCLEAR RIBONUCLEOPROTEIN U FAMILY MEMBER"/>
    <property type="match status" value="1"/>
</dbReference>
<dbReference type="Pfam" id="PF13671">
    <property type="entry name" value="AAA_33"/>
    <property type="match status" value="1"/>
</dbReference>
<dbReference type="Pfam" id="PF02037">
    <property type="entry name" value="SAP"/>
    <property type="match status" value="1"/>
</dbReference>
<dbReference type="Pfam" id="PF00622">
    <property type="entry name" value="SPRY"/>
    <property type="match status" value="1"/>
</dbReference>
<dbReference type="SMART" id="SM00513">
    <property type="entry name" value="SAP"/>
    <property type="match status" value="1"/>
</dbReference>
<dbReference type="SMART" id="SM00449">
    <property type="entry name" value="SPRY"/>
    <property type="match status" value="1"/>
</dbReference>
<dbReference type="SUPFAM" id="SSF49899">
    <property type="entry name" value="Concanavalin A-like lectins/glucanases"/>
    <property type="match status" value="1"/>
</dbReference>
<dbReference type="SUPFAM" id="SSF52540">
    <property type="entry name" value="P-loop containing nucleoside triphosphate hydrolases"/>
    <property type="match status" value="1"/>
</dbReference>
<dbReference type="SUPFAM" id="SSF68906">
    <property type="entry name" value="SAP domain"/>
    <property type="match status" value="1"/>
</dbReference>
<dbReference type="PROSITE" id="PS50188">
    <property type="entry name" value="B302_SPRY"/>
    <property type="match status" value="1"/>
</dbReference>
<dbReference type="PROSITE" id="PS50800">
    <property type="entry name" value="SAP"/>
    <property type="match status" value="1"/>
</dbReference>
<proteinExistence type="evidence at protein level"/>
<feature type="initiator methionine" description="Removed" evidence="1">
    <location>
        <position position="1"/>
    </location>
</feature>
<feature type="chain" id="PRO_0000442272" description="Heterogeneous nuclear ribonucleoprotein U">
    <location>
        <begin position="2"/>
        <end position="798"/>
    </location>
</feature>
<feature type="domain" description="SAP" evidence="1 4">
    <location>
        <begin position="8"/>
        <end position="42"/>
    </location>
</feature>
<feature type="domain" description="B30.2/SPRY" evidence="4">
    <location>
        <begin position="242"/>
        <end position="438"/>
    </location>
</feature>
<feature type="region of interest" description="Disordered" evidence="5">
    <location>
        <begin position="41"/>
        <end position="229"/>
    </location>
</feature>
<feature type="region of interest" description="ATPase domain" evidence="1">
    <location>
        <begin position="462"/>
        <end position="646"/>
    </location>
</feature>
<feature type="region of interest" description="Actin-binding" evidence="1">
    <location>
        <begin position="585"/>
        <end position="600"/>
    </location>
</feature>
<feature type="region of interest" description="Disordered" evidence="5">
    <location>
        <begin position="645"/>
        <end position="727"/>
    </location>
</feature>
<feature type="region of interest" description="RNA-binding RGG-box" evidence="2">
    <location>
        <begin position="688"/>
        <end position="713"/>
    </location>
</feature>
<feature type="region of interest" description="Disordered" evidence="5">
    <location>
        <begin position="743"/>
        <end position="772"/>
    </location>
</feature>
<feature type="coiled-coil region" evidence="3">
    <location>
        <begin position="624"/>
        <end position="651"/>
    </location>
</feature>
<feature type="compositionally biased region" description="Low complexity" evidence="5">
    <location>
        <begin position="71"/>
        <end position="80"/>
    </location>
</feature>
<feature type="compositionally biased region" description="Low complexity" evidence="5">
    <location>
        <begin position="103"/>
        <end position="113"/>
    </location>
</feature>
<feature type="compositionally biased region" description="Acidic residues" evidence="5">
    <location>
        <begin position="114"/>
        <end position="128"/>
    </location>
</feature>
<feature type="compositionally biased region" description="Acidic residues" evidence="5">
    <location>
        <begin position="134"/>
        <end position="147"/>
    </location>
</feature>
<feature type="compositionally biased region" description="Low complexity" evidence="5">
    <location>
        <begin position="153"/>
        <end position="169"/>
    </location>
</feature>
<feature type="compositionally biased region" description="Low complexity" evidence="5">
    <location>
        <begin position="192"/>
        <end position="203"/>
    </location>
</feature>
<feature type="compositionally biased region" description="Basic and acidic residues" evidence="5">
    <location>
        <begin position="207"/>
        <end position="229"/>
    </location>
</feature>
<feature type="compositionally biased region" description="Basic and acidic residues" evidence="5">
    <location>
        <begin position="645"/>
        <end position="657"/>
    </location>
</feature>
<feature type="compositionally biased region" description="Gly residues" evidence="5">
    <location>
        <begin position="684"/>
        <end position="702"/>
    </location>
</feature>
<feature type="compositionally biased region" description="Gly residues" evidence="5">
    <location>
        <begin position="713"/>
        <end position="723"/>
    </location>
</feature>
<feature type="binding site" evidence="3">
    <location>
        <begin position="478"/>
        <end position="485"/>
    </location>
    <ligand>
        <name>ATP</name>
        <dbReference type="ChEBI" id="CHEBI:30616"/>
    </ligand>
</feature>
<feature type="site" description="Cleavage; by CASP3" evidence="1">
    <location>
        <begin position="94"/>
        <end position="95"/>
    </location>
</feature>
<feature type="modified residue" description="N-acetylserine" evidence="1">
    <location>
        <position position="2"/>
    </location>
</feature>
<feature type="modified residue" description="Phosphoserine" evidence="1">
    <location>
        <position position="4"/>
    </location>
</feature>
<feature type="modified residue" description="N6-acetyllysine" evidence="2">
    <location>
        <position position="17"/>
    </location>
</feature>
<feature type="modified residue" description="N6-acetyllysine" evidence="2">
    <location>
        <position position="21"/>
    </location>
</feature>
<feature type="modified residue" description="Phosphoserine" evidence="11">
    <location>
        <position position="58"/>
    </location>
</feature>
<feature type="modified residue" description="N6-acetyllysine" evidence="2">
    <location>
        <position position="179"/>
    </location>
</feature>
<feature type="modified residue" description="ADP-ribosylserine" evidence="1">
    <location>
        <position position="180"/>
    </location>
</feature>
<feature type="modified residue" description="Citrulline" evidence="2">
    <location>
        <position position="229"/>
    </location>
</feature>
<feature type="modified residue" description="N6-acetyllysine; alternate" evidence="1">
    <location>
        <position position="239"/>
    </location>
</feature>
<feature type="modified residue" description="Phosphotyrosine" evidence="2">
    <location>
        <position position="240"/>
    </location>
</feature>
<feature type="modified residue" description="Phosphoserine" evidence="1">
    <location>
        <position position="241"/>
    </location>
</feature>
<feature type="modified residue" description="Phosphoserine" evidence="1">
    <location>
        <position position="245"/>
    </location>
</feature>
<feature type="modified residue" description="Phosphothreonine" evidence="1">
    <location>
        <position position="260"/>
    </location>
</feature>
<feature type="modified residue" description="N6-acetyllysine" evidence="1">
    <location>
        <position position="326"/>
    </location>
</feature>
<feature type="modified residue" description="N6-acetyllysine; alternate" evidence="1">
    <location>
        <position position="490"/>
    </location>
</feature>
<feature type="modified residue" description="N6-acetyllysine; alternate" evidence="1">
    <location>
        <position position="498"/>
    </location>
</feature>
<feature type="modified residue" description="Phosphothreonine" evidence="1">
    <location>
        <position position="506"/>
    </location>
</feature>
<feature type="modified residue" description="N6-acetyllysine" evidence="1">
    <location>
        <position position="525"/>
    </location>
</feature>
<feature type="modified residue" description="N6-acetyllysine; alternate" evidence="1">
    <location>
        <position position="539"/>
    </location>
</feature>
<feature type="modified residue" description="Phosphothreonine" evidence="1">
    <location>
        <position position="556"/>
    </location>
</feature>
<feature type="modified residue" description="N6-acetyllysine; alternate" evidence="1">
    <location>
        <position position="609"/>
    </location>
</feature>
<feature type="modified residue" description="Omega-N-methylarginine" evidence="1">
    <location>
        <position position="676"/>
    </location>
</feature>
<feature type="modified residue" description="Asymmetric dimethylarginine" evidence="2">
    <location>
        <position position="689"/>
    </location>
</feature>
<feature type="modified residue" description="Asymmetric dimethylarginine" evidence="2">
    <location>
        <position position="694"/>
    </location>
</feature>
<feature type="modified residue" description="Asymmetric dimethylarginine" evidence="2">
    <location>
        <position position="701"/>
    </location>
</feature>
<feature type="modified residue" description="Asymmetric dimethylarginine; alternate" evidence="1">
    <location>
        <position position="707"/>
    </location>
</feature>
<feature type="modified residue" description="Omega-N-methylarginine; alternate" evidence="2">
    <location>
        <position position="707"/>
    </location>
</feature>
<feature type="modified residue" description="Asymmetric dimethylarginine; alternate" evidence="1">
    <location>
        <position position="713"/>
    </location>
</feature>
<feature type="modified residue" description="Omega-N-methylarginine; alternate" evidence="1">
    <location>
        <position position="713"/>
    </location>
</feature>
<feature type="modified residue" description="Asymmetric dimethylarginine" evidence="1">
    <location>
        <position position="728"/>
    </location>
</feature>
<feature type="modified residue" description="Asymmetric dimethylarginine" evidence="1">
    <location>
        <position position="735"/>
    </location>
</feature>
<feature type="modified residue" description="N6-acetyllysine; alternate" evidence="1">
    <location>
        <position position="787"/>
    </location>
</feature>
<feature type="cross-link" description="Glycyl lysine isopeptide (Lys-Gly) (interchain with G-Cter in SUMO1); alternate" evidence="1">
    <location>
        <position position="239"/>
    </location>
</feature>
<feature type="cross-link" description="Glycyl lysine isopeptide (Lys-Gly) (interchain with G-Cter in SUMO2); alternate" evidence="1">
    <location>
        <position position="239"/>
    </location>
</feature>
<feature type="cross-link" description="Glycyl lysine isopeptide (Lys-Gly) (interchain with G-Cter in SUMO2)" evidence="1">
    <location>
        <position position="469"/>
    </location>
</feature>
<feature type="cross-link" description="Glycyl lysine isopeptide (Lys-Gly) (interchain with G-Cter in SUMO2); alternate" evidence="1">
    <location>
        <position position="490"/>
    </location>
</feature>
<feature type="cross-link" description="Glycyl lysine isopeptide (Lys-Gly) (interchain with G-Cter in SUMO2); alternate" evidence="1">
    <location>
        <position position="498"/>
    </location>
</feature>
<feature type="cross-link" description="Glycyl lysine isopeptide (Lys-Gly) (interchain with G-Cter in SUMO2)" evidence="1">
    <location>
        <position position="510"/>
    </location>
</feature>
<feature type="cross-link" description="Glycyl lysine isopeptide (Lys-Gly) (interchain with G-Cter in SUMO2); alternate" evidence="1">
    <location>
        <position position="539"/>
    </location>
</feature>
<feature type="cross-link" description="Glycyl lysine isopeptide (Lys-Gly) (interchain with G-Cter in SUMO2)" evidence="1">
    <location>
        <position position="548"/>
    </location>
</feature>
<feature type="cross-link" description="Glycyl lysine isopeptide (Lys-Gly) (interchain with G-Cter in SUMO2)" evidence="1">
    <location>
        <position position="583"/>
    </location>
</feature>
<feature type="cross-link" description="Glycyl lysine isopeptide (Lys-Gly) (interchain with G-Cter in SUMO2)" evidence="1">
    <location>
        <position position="600"/>
    </location>
</feature>
<feature type="cross-link" description="Glycyl lysine isopeptide (Lys-Gly) (interchain with G-Cter in SUMO2); alternate" evidence="1">
    <location>
        <position position="609"/>
    </location>
</feature>
<feature type="cross-link" description="Glycyl lysine isopeptide (Lys-Gly) (interchain with G-Cter in SUMO2)" evidence="1">
    <location>
        <position position="638"/>
    </location>
</feature>
<feature type="cross-link" description="Glycyl lysine isopeptide (Lys-Gly) (interchain with G-Cter in SUMO2)" evidence="1">
    <location>
        <position position="644"/>
    </location>
</feature>
<feature type="cross-link" description="Glycyl lysine isopeptide (Lys-Gly) (interchain with G-Cter in SUMO2); alternate" evidence="1">
    <location>
        <position position="787"/>
    </location>
</feature>
<keyword id="KW-0007">Acetylation</keyword>
<keyword id="KW-0010">Activator</keyword>
<keyword id="KW-0013">ADP-ribosylation</keyword>
<keyword id="KW-0067">ATP-binding</keyword>
<keyword id="KW-0131">Cell cycle</keyword>
<keyword id="KW-0132">Cell division</keyword>
<keyword id="KW-0137">Centromere</keyword>
<keyword id="KW-0156">Chromatin regulator</keyword>
<keyword id="KW-0158">Chromosome</keyword>
<keyword id="KW-0164">Citrullination</keyword>
<keyword id="KW-0175">Coiled coil</keyword>
<keyword id="KW-0963">Cytoplasm</keyword>
<keyword id="KW-0206">Cytoskeleton</keyword>
<keyword id="KW-0217">Developmental protein</keyword>
<keyword id="KW-0221">Differentiation</keyword>
<keyword id="KW-1017">Isopeptide bond</keyword>
<keyword id="KW-0995">Kinetochore</keyword>
<keyword id="KW-0488">Methylation</keyword>
<keyword id="KW-0498">Mitosis</keyword>
<keyword id="KW-0507">mRNA processing</keyword>
<keyword id="KW-0508">mRNA splicing</keyword>
<keyword id="KW-0547">Nucleotide-binding</keyword>
<keyword id="KW-0539">Nucleus</keyword>
<keyword id="KW-0597">Phosphoprotein</keyword>
<keyword id="KW-1185">Reference proteome</keyword>
<keyword id="KW-0678">Repressor</keyword>
<keyword id="KW-0687">Ribonucleoprotein</keyword>
<keyword id="KW-0747">Spliceosome</keyword>
<keyword id="KW-0804">Transcription</keyword>
<keyword id="KW-0805">Transcription regulation</keyword>
<keyword id="KW-0832">Ubl conjugation</keyword>
<organism evidence="9">
    <name type="scientific">Rattus norvegicus</name>
    <name type="common">Rat</name>
    <dbReference type="NCBI Taxonomy" id="10116"/>
    <lineage>
        <taxon>Eukaryota</taxon>
        <taxon>Metazoa</taxon>
        <taxon>Chordata</taxon>
        <taxon>Craniata</taxon>
        <taxon>Vertebrata</taxon>
        <taxon>Euteleostomi</taxon>
        <taxon>Mammalia</taxon>
        <taxon>Eutheria</taxon>
        <taxon>Euarchontoglires</taxon>
        <taxon>Glires</taxon>
        <taxon>Rodentia</taxon>
        <taxon>Myomorpha</taxon>
        <taxon>Muroidea</taxon>
        <taxon>Muridae</taxon>
        <taxon>Murinae</taxon>
        <taxon>Rattus</taxon>
    </lineage>
</organism>
<comment type="function">
    <text evidence="1 2 6 7">DNA- and RNA-binding protein involved in several cellular processes such as nuclear chromatin organization, telomere-length regulation, transcription, mRNA alternative splicing and stability, Xist-mediated transcriptional silencing and mitotic cell progression. Plays a role in the regulation of interphase large-scale gene-rich chromatin organization through chromatin-associated RNAs (caRNAs) in a transcription-dependent manner, and thereby maintains genomic stability. Required for the localization of the long non-coding Xist RNA on the inactive chromosome X (Xi) and the subsequent initiation and maintenance of X-linked transcriptional gene silencing during X-inactivation (By similarity). Required for the topoisomerase TOP2A protein stability and activity in a RNA-dependent manner (PubMed:20554522). Plays a role as a RNA polymerase II (Pol II) holoenzyme transcription regulator. Promotes transcription initiation by direct association with the core-TFIIH basal transcription factor complex for the assembly of a functional pre-initiation complex with Pol II in a actin-dependent manner. Blocks Pol II transcription elongation activity by inhibiting the C-terminal domain (CTD) phosphorylation of Pol II and dissociates from Pol II pre-initiation complex prior to productive transcription elongation. Positively regulates CBX5-induced transcriptional gene silencing and retention of CBX5 in the nucleus. Negatively regulates glucocorticoid-mediated transcriptional activation. Key regulator of transcription initiation and elongation in embryonic stem cells upon leukemia inhibitory factor (LIF) signaling. Involved in the long non-coding RNA H19-mediated Pol II transcriptional repression. Participates in the circadian regulation of the core clock component BMAL1 transcription. Plays a role in the regulation of telomere length. Plays a role as a global pre-mRNA alternative splicing modulator by regulating U2 small nuclear ribonucleoprotein (snRNP) biogenesis. Plays a role in mRNA stability. Component of the CRD-mediated complex that promotes MYC mRNA stabilization. Enhances the expression of specific genes, such as tumor necrosis factor TNFA, by regulating mRNA stability, possibly through binding to the 3'-untranslated region (UTR). Plays a role in mitotic cell cycle regulation. Involved in the formation of stable mitotic spindle microtubules (MTs) attachment to kinetochore, spindle organization and chromosome congression. Phosphorylation at Ser-58 by PLK1 is required for chromosome alignement and segregation and progression through mitosis. Also contributes to the targeting of AURKA to mitotic spindle MTs (By similarity). Binds to double- and single-stranded DNA and RNA, poly(A), poly(C) and poly(G) oligoribonucleotides (PubMed:20554522). Binds to chromatin-associated RNAs (caRNAs) (By similarity). Associates with chromatin to scaffold/matrix attachment region (S/MAR) elements in DNA (PubMed:8509422). Associates with chromatin in a chromatin-associated RNAs (caRNAs)-dependent manner. Binds to the Xist RNA. Binds the long non-coding H19 RNA. Binds to SMN1/2 pre-mRNAs at G/U-rich regions. Binds to small nuclear RNAs (snRNAs). Binds to the 3'-UTR of TNFA mRNA. Binds (via RNA-binding RGG-box region) to the long non-coding Xist RNA; this binding is direct and bridges the Xist RNA and the inactive chromosome X (Xi). Also negatively regulates embryonic stem cell differentiation upon LIF signaling. Required for embryonic development (By similarity). Binds to brown fat long non-coding RNA 1 (Blnc1); facilitates the recruitment of Blnc1 by ZBTB7B required to drive brown and beige fat development and thermogenesis (By similarity).</text>
</comment>
<comment type="subunit">
    <text evidence="1 2 6">Oligomer (via ATPase domain and RNA-binding RGG-box region); oligomerization occurs upon ATP-binding in a chromatin-associated RNAs (caRNAs)- and transcription-dependent manner and is required for chromatin decompaction. ATP hydrolysis is required to cycle from an oligomeric to monomeric state to compact chromatin. Component of the coding region determinant (CRD)-mediated complex, composed of DHX9, HNRNPU, IGF2BP1, SYNCRIP and YBX1. Identified in the spliceosome C complex. Identified in a IGF2BP1-dependent mRNP granule complex containing untranslated mRNAs. Associates with heterogeneous nuclear ribonucleoprotein (hnRNP) particles. Associates (via middle region) with the C-terminal domain (CTD) RNA polymerase II (Pol II) holoenzyme; this association occurs in a RNA-independent manner. Associates (via middle region) with the core-TFIIH basal transcription factor complex; this association inhibits the CTD phosphorylation of RNA polymerase II holoenzyme by down-regulating TFIIH kinase activity. Associates with the telomerase holoenzyme complex. Associates with spindle microtubules (MTs) in a TPX2-dependent manner. Interacts (via C-terminus) with actin; this interaction is direct and mediates association with the phosphorylated CTD of RNA polymerase II and is disrupted in presence of the long non-coding H19 RNA. Interacts with AURKA. Interacts (via C-terminus) with CBX5; this interaction is, at least in part, RNA-dependent. Interacts with CR2. Interacts with CRY1. Interacts (via C-terminus) with EP300; this interaction enhances DNA-binding to nuclear scaffold/matrix attachment region (S/MAR) elements. Interacts with ERBB4. Interacts with GEMIN5. Interacts with IGF2BP1. Interacts with IGF2BP2 and IGF2BP3. Interacts with NCL; this interaction occurs during mitosis. Interacts (via C-terminus) with NR3C1 (via C-terminus). Interacts with PLK1; this interaction induces phosphorylation of HNRNPU at Ser-58 in mitosis. Interacts with POU3F4. Interacts with SMARCA4; this interaction occurs in embryonic stem cells and stimulates global Pol II-mediated transcription (By similarity). Interacts (via C-terminus) with TOP2A; this interaction protects the topoisomerase TOP2A from degradation and positively regulates the relaxation of supercoiled DNA by TOP2A in a RNA-dependent manner (PubMed:20554522). Interacts with TPX2; this interaction recruits HNRNPU to spindle microtubules (MTs). Interacts with UBQLN2 (By similarity). Interacts (via RNA-binding RGG-box region) with ZBTB7B; the interaction facilitates the recruitment of long non-coding RNA Blnc1 by ZBTB7B (By similarity). Interacts with ERCC6 (By similarity).</text>
</comment>
<comment type="interaction">
    <interactant intactId="EBI-931601">
        <id>Q6IMY8</id>
    </interactant>
    <interactant intactId="EBI-26553770">
        <id>D4A5I9</id>
        <label>Myo6</label>
    </interactant>
    <organismsDiffer>false</organismsDiffer>
    <experiments>4</experiments>
</comment>
<comment type="subcellular location">
    <subcellularLocation>
        <location evidence="1">Nucleus</location>
    </subcellularLocation>
    <subcellularLocation>
        <location evidence="1">Nucleus matrix</location>
    </subcellularLocation>
    <subcellularLocation>
        <location evidence="1">Chromosome</location>
    </subcellularLocation>
    <subcellularLocation>
        <location evidence="1">Nucleus speckle</location>
    </subcellularLocation>
    <subcellularLocation>
        <location evidence="1">Cytoplasm</location>
        <location evidence="1">Cytoskeleton</location>
        <location evidence="1">Microtubule organizing center</location>
        <location evidence="1">Centrosome</location>
    </subcellularLocation>
    <subcellularLocation>
        <location evidence="1">Chromosome</location>
        <location evidence="1">Centromere</location>
        <location evidence="1">Kinetochore</location>
    </subcellularLocation>
    <subcellularLocation>
        <location evidence="1">Cytoplasm</location>
        <location evidence="1">Cytoskeleton</location>
        <location evidence="1">Spindle</location>
    </subcellularLocation>
    <subcellularLocation>
        <location evidence="1">Cytoplasm</location>
        <location evidence="1">Cytoskeleton</location>
        <location evidence="1">Spindle pole</location>
    </subcellularLocation>
    <subcellularLocation>
        <location evidence="1">Midbody</location>
    </subcellularLocation>
    <subcellularLocation>
        <location evidence="1">Cytoplasm</location>
    </subcellularLocation>
    <subcellularLocation>
        <location evidence="1">Cell surface</location>
    </subcellularLocation>
    <subcellularLocation>
        <location evidence="1">Cytoplasmic granule</location>
    </subcellularLocation>
    <text evidence="1 2">Localizes at inactive X chromosome (Xi) regions. Localizes in the nucleus during interphase. At metaphase, localizes with mitotic spindle microtubules (MTs). At anaphase, localizes in the mitotic spindle midzone. Localizes in spindle MTs proximal to spindle poles in a TPX2- and AURKA-dependent manner. The Ser-58 phosphorylated form localizes to centrosomes during prophase and metaphase, to mitotic spindles in anaphase and to the midbody during cytokinesis. Colocalizes with SMARCA4 in the nucleus (By similarity). Colocalizes with CBX5 in the nucleus. Colocalizes with NR3C1 in nuclear speckles. Localized in cytoplasmic ribonucleoprotein (RNP) granules containing untranslated mRNAs.</text>
</comment>
<comment type="domain">
    <text evidence="1 2">The SAP domain is necessary for specific binding to nuclear scaffold/matrix attachment region (S/MAR) elements in DNA. The RNA-binding RGG-box region is necessary for its association with inactive X chromosome (Xi) regions and to chromatin-associated RNAs (caRNAs). Both the DNA-binding domain SAP and the RNA-binding RGG-box region are necessary for the localization of Xist RNA on the Xi. The ATPase and RNA-binding RGG-box regions are necessary for oligomerization.</text>
</comment>
<comment type="PTM">
    <text evidence="1">Cleaved at Asp-94 by CASP3 during T-cell apoptosis, resulting in a loss of DNA- and chromatin-binding activities.</text>
</comment>
<comment type="PTM">
    <text evidence="1">Extensively phosphorylated. Phosphorylated on Ser-58 by PLK1 and dephosphorylated by protein phosphatase 2A (PP2A) in mitosis.</text>
</comment>
<comment type="PTM">
    <text evidence="1 2">Arg-707 and Arg-713 are dimethylated, probably to asymmetric dimethylarginine (By similarity).</text>
</comment>
<comment type="PTM">
    <text evidence="2">Citrullinated by PADI4.</text>
</comment>
<accession>Q6IMY8</accession>
<reference key="1">
    <citation type="journal article" date="2004" name="Nature">
        <title>Genome sequence of the Brown Norway rat yields insights into mammalian evolution.</title>
        <authorList>
            <person name="Gibbs R.A."/>
            <person name="Weinstock G.M."/>
            <person name="Metzker M.L."/>
            <person name="Muzny D.M."/>
            <person name="Sodergren E.J."/>
            <person name="Scherer S."/>
            <person name="Scott G."/>
            <person name="Steffen D."/>
            <person name="Worley K.C."/>
            <person name="Burch P.E."/>
            <person name="Okwuonu G."/>
            <person name="Hines S."/>
            <person name="Lewis L."/>
            <person name="Deramo C."/>
            <person name="Delgado O."/>
            <person name="Dugan-Rocha S."/>
            <person name="Miner G."/>
            <person name="Morgan M."/>
            <person name="Hawes A."/>
            <person name="Gill R."/>
            <person name="Holt R.A."/>
            <person name="Adams M.D."/>
            <person name="Amanatides P.G."/>
            <person name="Baden-Tillson H."/>
            <person name="Barnstead M."/>
            <person name="Chin S."/>
            <person name="Evans C.A."/>
            <person name="Ferriera S."/>
            <person name="Fosler C."/>
            <person name="Glodek A."/>
            <person name="Gu Z."/>
            <person name="Jennings D."/>
            <person name="Kraft C.L."/>
            <person name="Nguyen T."/>
            <person name="Pfannkoch C.M."/>
            <person name="Sitter C."/>
            <person name="Sutton G.G."/>
            <person name="Venter J.C."/>
            <person name="Woodage T."/>
            <person name="Smith D."/>
            <person name="Lee H.-M."/>
            <person name="Gustafson E."/>
            <person name="Cahill P."/>
            <person name="Kana A."/>
            <person name="Doucette-Stamm L."/>
            <person name="Weinstock K."/>
            <person name="Fechtel K."/>
            <person name="Weiss R.B."/>
            <person name="Dunn D.M."/>
            <person name="Green E.D."/>
            <person name="Blakesley R.W."/>
            <person name="Bouffard G.G."/>
            <person name="De Jong P.J."/>
            <person name="Osoegawa K."/>
            <person name="Zhu B."/>
            <person name="Marra M."/>
            <person name="Schein J."/>
            <person name="Bosdet I."/>
            <person name="Fjell C."/>
            <person name="Jones S."/>
            <person name="Krzywinski M."/>
            <person name="Mathewson C."/>
            <person name="Siddiqui A."/>
            <person name="Wye N."/>
            <person name="McPherson J."/>
            <person name="Zhao S."/>
            <person name="Fraser C.M."/>
            <person name="Shetty J."/>
            <person name="Shatsman S."/>
            <person name="Geer K."/>
            <person name="Chen Y."/>
            <person name="Abramzon S."/>
            <person name="Nierman W.C."/>
            <person name="Havlak P.H."/>
            <person name="Chen R."/>
            <person name="Durbin K.J."/>
            <person name="Egan A."/>
            <person name="Ren Y."/>
            <person name="Song X.-Z."/>
            <person name="Li B."/>
            <person name="Liu Y."/>
            <person name="Qin X."/>
            <person name="Cawley S."/>
            <person name="Cooney A.J."/>
            <person name="D'Souza L.M."/>
            <person name="Martin K."/>
            <person name="Wu J.Q."/>
            <person name="Gonzalez-Garay M.L."/>
            <person name="Jackson A.R."/>
            <person name="Kalafus K.J."/>
            <person name="McLeod M.P."/>
            <person name="Milosavljevic A."/>
            <person name="Virk D."/>
            <person name="Volkov A."/>
            <person name="Wheeler D.A."/>
            <person name="Zhang Z."/>
            <person name="Bailey J.A."/>
            <person name="Eichler E.E."/>
            <person name="Tuzun E."/>
            <person name="Birney E."/>
            <person name="Mongin E."/>
            <person name="Ureta-Vidal A."/>
            <person name="Woodwark C."/>
            <person name="Zdobnov E."/>
            <person name="Bork P."/>
            <person name="Suyama M."/>
            <person name="Torrents D."/>
            <person name="Alexandersson M."/>
            <person name="Trask B.J."/>
            <person name="Young J.M."/>
            <person name="Huang H."/>
            <person name="Wang H."/>
            <person name="Xing H."/>
            <person name="Daniels S."/>
            <person name="Gietzen D."/>
            <person name="Schmidt J."/>
            <person name="Stevens K."/>
            <person name="Vitt U."/>
            <person name="Wingrove J."/>
            <person name="Camara F."/>
            <person name="Mar Alba M."/>
            <person name="Abril J.F."/>
            <person name="Guigo R."/>
            <person name="Smit A."/>
            <person name="Dubchak I."/>
            <person name="Rubin E.M."/>
            <person name="Couronne O."/>
            <person name="Poliakov A."/>
            <person name="Huebner N."/>
            <person name="Ganten D."/>
            <person name="Goesele C."/>
            <person name="Hummel O."/>
            <person name="Kreitler T."/>
            <person name="Lee Y.-A."/>
            <person name="Monti J."/>
            <person name="Schulz H."/>
            <person name="Zimdahl H."/>
            <person name="Himmelbauer H."/>
            <person name="Lehrach H."/>
            <person name="Jacob H.J."/>
            <person name="Bromberg S."/>
            <person name="Gullings-Handley J."/>
            <person name="Jensen-Seaman M.I."/>
            <person name="Kwitek A.E."/>
            <person name="Lazar J."/>
            <person name="Pasko D."/>
            <person name="Tonellato P.J."/>
            <person name="Twigger S."/>
            <person name="Ponting C.P."/>
            <person name="Duarte J.M."/>
            <person name="Rice S."/>
            <person name="Goodstadt L."/>
            <person name="Beatson S.A."/>
            <person name="Emes R.D."/>
            <person name="Winter E.E."/>
            <person name="Webber C."/>
            <person name="Brandt P."/>
            <person name="Nyakatura G."/>
            <person name="Adetobi M."/>
            <person name="Chiaromonte F."/>
            <person name="Elnitski L."/>
            <person name="Eswara P."/>
            <person name="Hardison R.C."/>
            <person name="Hou M."/>
            <person name="Kolbe D."/>
            <person name="Makova K."/>
            <person name="Miller W."/>
            <person name="Nekrutenko A."/>
            <person name="Riemer C."/>
            <person name="Schwartz S."/>
            <person name="Taylor J."/>
            <person name="Yang S."/>
            <person name="Zhang Y."/>
            <person name="Lindpaintner K."/>
            <person name="Andrews T.D."/>
            <person name="Caccamo M."/>
            <person name="Clamp M."/>
            <person name="Clarke L."/>
            <person name="Curwen V."/>
            <person name="Durbin R.M."/>
            <person name="Eyras E."/>
            <person name="Searle S.M."/>
            <person name="Cooper G.M."/>
            <person name="Batzoglou S."/>
            <person name="Brudno M."/>
            <person name="Sidow A."/>
            <person name="Stone E.A."/>
            <person name="Payseur B.A."/>
            <person name="Bourque G."/>
            <person name="Lopez-Otin C."/>
            <person name="Puente X.S."/>
            <person name="Chakrabarti K."/>
            <person name="Chatterji S."/>
            <person name="Dewey C."/>
            <person name="Pachter L."/>
            <person name="Bray N."/>
            <person name="Yap V.B."/>
            <person name="Caspi A."/>
            <person name="Tesler G."/>
            <person name="Pevzner P.A."/>
            <person name="Haussler D."/>
            <person name="Roskin K.M."/>
            <person name="Baertsch R."/>
            <person name="Clawson H."/>
            <person name="Furey T.S."/>
            <person name="Hinrichs A.S."/>
            <person name="Karolchik D."/>
            <person name="Kent W.J."/>
            <person name="Rosenbloom K.R."/>
            <person name="Trumbower H."/>
            <person name="Weirauch M."/>
            <person name="Cooper D.N."/>
            <person name="Stenson P.D."/>
            <person name="Ma B."/>
            <person name="Brent M."/>
            <person name="Arumugam M."/>
            <person name="Shteynberg D."/>
            <person name="Copley R.R."/>
            <person name="Taylor M.S."/>
            <person name="Riethman H."/>
            <person name="Mudunuri U."/>
            <person name="Peterson J."/>
            <person name="Guyer M."/>
            <person name="Felsenfeld A."/>
            <person name="Old S."/>
            <person name="Mockrin S."/>
            <person name="Collins F.S."/>
        </authorList>
    </citation>
    <scope>NUCLEOTIDE SEQUENCE [LARGE SCALE GENOMIC DNA]</scope>
    <source>
        <strain>Brown Norway</strain>
    </source>
</reference>
<reference key="2">
    <citation type="submission" date="2005-07" db="EMBL/GenBank/DDBJ databases">
        <authorList>
            <person name="Mural R.J."/>
            <person name="Adams M.D."/>
            <person name="Myers E.W."/>
            <person name="Smith H.O."/>
            <person name="Venter J.C."/>
        </authorList>
    </citation>
    <scope>NUCLEOTIDE SEQUENCE [LARGE SCALE GENOMIC DNA]</scope>
    <source>
        <strain>Brown Norway</strain>
    </source>
</reference>
<reference key="3">
    <citation type="journal article" date="2004" name="Genome Res.">
        <title>The status, quality, and expansion of the NIH full-length cDNA project: the Mammalian Gene Collection (MGC).</title>
        <authorList>
            <consortium name="The MGC Project Team"/>
        </authorList>
    </citation>
    <scope>NUCLEOTIDE SEQUENCE [LARGE SCALE MRNA]</scope>
    <source>
        <tissue>Lung</tissue>
    </source>
</reference>
<reference key="4">
    <citation type="journal article" date="1993" name="J. Biol. Chem.">
        <title>Identification and characterization of a nuclear scaffold protein that binds the matrix attachment region DNA.</title>
        <authorList>
            <person name="Tsutsui K."/>
            <person name="Tsutsui K."/>
            <person name="Okada S."/>
            <person name="Watarai S."/>
            <person name="Seki S."/>
            <person name="Yasuda T."/>
            <person name="Shohmori T."/>
        </authorList>
    </citation>
    <scope>DNA-BINDING</scope>
</reference>
<reference key="5">
    <citation type="journal article" date="2010" name="J. Biol. Chem.">
        <title>Regulation of DNA Topoisomerase IIbeta through RNA-dependent association with heterogeneous nuclear ribonucleoprotein U (hnRNP U).</title>
        <authorList>
            <person name="Kawano S."/>
            <person name="Miyaji M."/>
            <person name="Ichiyasu S."/>
            <person name="Tsutsui K.M."/>
            <person name="Tsutsui K."/>
        </authorList>
    </citation>
    <scope>FUNCTION</scope>
    <scope>INTERACTION WITH TOP2A</scope>
    <scope>RNA-BINDING</scope>
    <scope>IDENTIFICATION BY MASS SPECTROMETRY</scope>
</reference>
<reference key="6">
    <citation type="journal article" date="2012" name="Nat. Commun.">
        <title>Quantitative maps of protein phosphorylation sites across 14 different rat organs and tissues.</title>
        <authorList>
            <person name="Lundby A."/>
            <person name="Secher A."/>
            <person name="Lage K."/>
            <person name="Nordsborg N.B."/>
            <person name="Dmytriyev A."/>
            <person name="Lundby C."/>
            <person name="Olsen J.V."/>
        </authorList>
    </citation>
    <scope>PHOSPHORYLATION [LARGE SCALE ANALYSIS] AT SER-58</scope>
    <scope>IDENTIFICATION BY MASS SPECTROMETRY [LARGE SCALE ANALYSIS]</scope>
</reference>
<evidence type="ECO:0000250" key="1">
    <source>
        <dbReference type="UniProtKB" id="Q00839"/>
    </source>
</evidence>
<evidence type="ECO:0000250" key="2">
    <source>
        <dbReference type="UniProtKB" id="Q8VEK3"/>
    </source>
</evidence>
<evidence type="ECO:0000255" key="3"/>
<evidence type="ECO:0000255" key="4">
    <source>
        <dbReference type="PROSITE-ProRule" id="PRU00186"/>
    </source>
</evidence>
<evidence type="ECO:0000256" key="5">
    <source>
        <dbReference type="SAM" id="MobiDB-lite"/>
    </source>
</evidence>
<evidence type="ECO:0000269" key="6">
    <source>
    </source>
</evidence>
<evidence type="ECO:0000269" key="7">
    <source>
    </source>
</evidence>
<evidence type="ECO:0000303" key="8">
    <source>
    </source>
</evidence>
<evidence type="ECO:0000312" key="9">
    <source>
        <dbReference type="EMBL" id="AAH72529.1"/>
    </source>
</evidence>
<evidence type="ECO:0000312" key="10">
    <source>
        <dbReference type="RGD" id="620372"/>
    </source>
</evidence>
<evidence type="ECO:0007744" key="11">
    <source>
    </source>
</evidence>
<protein>
    <recommendedName>
        <fullName evidence="10">Heterogeneous nuclear ribonucleoprotein U</fullName>
        <shortName evidence="10">hnRNP U</shortName>
    </recommendedName>
    <alternativeName>
        <fullName evidence="8">SP120</fullName>
    </alternativeName>
    <alternativeName>
        <fullName evidence="1">Scaffold-attachment factor A</fullName>
        <shortName evidence="1">SAF-A</shortName>
    </alternativeName>
</protein>
<sequence length="798" mass="87732">MSSSPVNVKKLKVSELKEELKKRRLSDKGLKADLMDRLQAALDNEAGGRPAMEPGNGSLDLGGDAAGRSGAGLEQEAAAGAEDDEEEEGIAALDGDQMELGEENGAAGAADAGAMEEEEAASEDENGDDQGFQEGEDELGDEEEGAGDENGHGEQQSQPPAAAQQASQQRGPGKEAAGKSSGPTSLFAVTVAPPGARQGQQQAGGDGKTEQKAGDKKRGVKRPREDHGRGYFEYIEENKYSRAKSPQPPVEEEDEHFDDTVVCLDTYNCDLHFKISRDRLSASSLTMESFAFLWAGGRASYGVSKGKVCFEMKVTEKIPVRHLYTKDIDIHEVRIGWSLTTSGMLLGEEEFSYGYSLKGIKTCNCETEDYGEKFDENDVITCFANFETDEVELSYAKNGQDLGVAFKISKEVLADRPLFPHVLCHNCAVEFNFGQKEKPYFPIPEDCTFIQNVPLEDRVRGPKGPEEKKDCEVVMMIGLPGAGKTTWVTKHAAENPGKYNILGTNTIMDKMMVAGFKKQMADTGKLNTLLQRAPQCLGKFIEIAARKKRNFILDQTNVSAAAQRRKMCLFAGFQRKAVVVCPKDEDYKQRTQKKAEVEGKDLPEHAVLKMKGNFTLPEVAECFDEITYVELQKEEAQKLLEQYKEESKKALPPEKKQNTGSKKSNKNKSGKNQFNRGGGHRGRGGFNMRGGNFRGGAPGNRGGYNRRGNMPQRGGGGGSGGIGYPYPRGPVFPGRGGYSNRGNYNRGGMPNRGNYNQNFRGRGNNRGYKNQSQGYNQWQQGQFWGQKPWSQHYHQGYY</sequence>
<name>HNRPU_RAT</name>
<gene>
    <name evidence="10" type="primary">Hnrnpu</name>
    <name type="synonym">Hnrpu</name>
    <name type="ORF">rCG_20317</name>
</gene>